<accession>P0DG57</accession>
<accession>Q8K635</accession>
<proteinExistence type="inferred from homology"/>
<feature type="chain" id="PRO_0000411618" description="Serine--tRNA ligase">
    <location>
        <begin position="1"/>
        <end position="425"/>
    </location>
</feature>
<feature type="binding site" evidence="1">
    <location>
        <begin position="230"/>
        <end position="232"/>
    </location>
    <ligand>
        <name>L-serine</name>
        <dbReference type="ChEBI" id="CHEBI:33384"/>
    </ligand>
</feature>
<feature type="binding site" evidence="1">
    <location>
        <begin position="261"/>
        <end position="263"/>
    </location>
    <ligand>
        <name>ATP</name>
        <dbReference type="ChEBI" id="CHEBI:30616"/>
    </ligand>
</feature>
<feature type="binding site" evidence="1">
    <location>
        <position position="284"/>
    </location>
    <ligand>
        <name>L-serine</name>
        <dbReference type="ChEBI" id="CHEBI:33384"/>
    </ligand>
</feature>
<feature type="binding site" evidence="1">
    <location>
        <begin position="348"/>
        <end position="351"/>
    </location>
    <ligand>
        <name>ATP</name>
        <dbReference type="ChEBI" id="CHEBI:30616"/>
    </ligand>
</feature>
<feature type="binding site" evidence="1">
    <location>
        <position position="384"/>
    </location>
    <ligand>
        <name>L-serine</name>
        <dbReference type="ChEBI" id="CHEBI:33384"/>
    </ligand>
</feature>
<reference key="1">
    <citation type="journal article" date="2003" name="Genome Res.">
        <title>Genome sequence of an M3 strain of Streptococcus pyogenes reveals a large-scale genomic rearrangement in invasive strains and new insights into phage evolution.</title>
        <authorList>
            <person name="Nakagawa I."/>
            <person name="Kurokawa K."/>
            <person name="Yamashita A."/>
            <person name="Nakata M."/>
            <person name="Tomiyasu Y."/>
            <person name="Okahashi N."/>
            <person name="Kawabata S."/>
            <person name="Yamazaki K."/>
            <person name="Shiba T."/>
            <person name="Yasunaga T."/>
            <person name="Hayashi H."/>
            <person name="Hattori M."/>
            <person name="Hamada S."/>
        </authorList>
    </citation>
    <scope>NUCLEOTIDE SEQUENCE [LARGE SCALE GENOMIC DNA]</scope>
    <source>
        <strain>SSI-1</strain>
    </source>
</reference>
<dbReference type="EC" id="6.1.1.11" evidence="1"/>
<dbReference type="EMBL" id="BA000034">
    <property type="protein sequence ID" value="BAC63445.1"/>
    <property type="molecule type" value="Genomic_DNA"/>
</dbReference>
<dbReference type="RefSeq" id="WP_011054935.1">
    <property type="nucleotide sequence ID" value="NC_004606.1"/>
</dbReference>
<dbReference type="SMR" id="P0DG57"/>
<dbReference type="KEGG" id="sps:SPs0350"/>
<dbReference type="HOGENOM" id="CLU_023797_1_1_9"/>
<dbReference type="UniPathway" id="UPA00906">
    <property type="reaction ID" value="UER00895"/>
</dbReference>
<dbReference type="GO" id="GO:0005737">
    <property type="term" value="C:cytoplasm"/>
    <property type="evidence" value="ECO:0007669"/>
    <property type="project" value="UniProtKB-SubCell"/>
</dbReference>
<dbReference type="GO" id="GO:0005524">
    <property type="term" value="F:ATP binding"/>
    <property type="evidence" value="ECO:0007669"/>
    <property type="project" value="UniProtKB-UniRule"/>
</dbReference>
<dbReference type="GO" id="GO:0140096">
    <property type="term" value="F:catalytic activity, acting on a protein"/>
    <property type="evidence" value="ECO:0007669"/>
    <property type="project" value="UniProtKB-ARBA"/>
</dbReference>
<dbReference type="GO" id="GO:0004828">
    <property type="term" value="F:serine-tRNA ligase activity"/>
    <property type="evidence" value="ECO:0007669"/>
    <property type="project" value="UniProtKB-UniRule"/>
</dbReference>
<dbReference type="GO" id="GO:0016740">
    <property type="term" value="F:transferase activity"/>
    <property type="evidence" value="ECO:0007669"/>
    <property type="project" value="UniProtKB-ARBA"/>
</dbReference>
<dbReference type="GO" id="GO:0016260">
    <property type="term" value="P:selenocysteine biosynthetic process"/>
    <property type="evidence" value="ECO:0007669"/>
    <property type="project" value="UniProtKB-UniRule"/>
</dbReference>
<dbReference type="GO" id="GO:0006434">
    <property type="term" value="P:seryl-tRNA aminoacylation"/>
    <property type="evidence" value="ECO:0007669"/>
    <property type="project" value="UniProtKB-UniRule"/>
</dbReference>
<dbReference type="CDD" id="cd00770">
    <property type="entry name" value="SerRS_core"/>
    <property type="match status" value="1"/>
</dbReference>
<dbReference type="Gene3D" id="3.30.930.10">
    <property type="entry name" value="Bira Bifunctional Protein, Domain 2"/>
    <property type="match status" value="1"/>
</dbReference>
<dbReference type="Gene3D" id="1.10.287.40">
    <property type="entry name" value="Serine-tRNA synthetase, tRNA binding domain"/>
    <property type="match status" value="1"/>
</dbReference>
<dbReference type="HAMAP" id="MF_00176">
    <property type="entry name" value="Ser_tRNA_synth_type1"/>
    <property type="match status" value="1"/>
</dbReference>
<dbReference type="InterPro" id="IPR002314">
    <property type="entry name" value="aa-tRNA-synt_IIb"/>
</dbReference>
<dbReference type="InterPro" id="IPR006195">
    <property type="entry name" value="aa-tRNA-synth_II"/>
</dbReference>
<dbReference type="InterPro" id="IPR045864">
    <property type="entry name" value="aa-tRNA-synth_II/BPL/LPL"/>
</dbReference>
<dbReference type="InterPro" id="IPR002317">
    <property type="entry name" value="Ser-tRNA-ligase_type_1"/>
</dbReference>
<dbReference type="InterPro" id="IPR015866">
    <property type="entry name" value="Ser-tRNA-synth_1_N"/>
</dbReference>
<dbReference type="InterPro" id="IPR042103">
    <property type="entry name" value="SerRS_1_N_sf"/>
</dbReference>
<dbReference type="InterPro" id="IPR033729">
    <property type="entry name" value="SerRS_core"/>
</dbReference>
<dbReference type="InterPro" id="IPR010978">
    <property type="entry name" value="tRNA-bd_arm"/>
</dbReference>
<dbReference type="NCBIfam" id="TIGR00414">
    <property type="entry name" value="serS"/>
    <property type="match status" value="1"/>
</dbReference>
<dbReference type="PANTHER" id="PTHR43697:SF1">
    <property type="entry name" value="SERINE--TRNA LIGASE"/>
    <property type="match status" value="1"/>
</dbReference>
<dbReference type="PANTHER" id="PTHR43697">
    <property type="entry name" value="SERYL-TRNA SYNTHETASE"/>
    <property type="match status" value="1"/>
</dbReference>
<dbReference type="Pfam" id="PF02403">
    <property type="entry name" value="Seryl_tRNA_N"/>
    <property type="match status" value="1"/>
</dbReference>
<dbReference type="Pfam" id="PF00587">
    <property type="entry name" value="tRNA-synt_2b"/>
    <property type="match status" value="1"/>
</dbReference>
<dbReference type="PIRSF" id="PIRSF001529">
    <property type="entry name" value="Ser-tRNA-synth_IIa"/>
    <property type="match status" value="1"/>
</dbReference>
<dbReference type="PRINTS" id="PR00981">
    <property type="entry name" value="TRNASYNTHSER"/>
</dbReference>
<dbReference type="SUPFAM" id="SSF55681">
    <property type="entry name" value="Class II aaRS and biotin synthetases"/>
    <property type="match status" value="1"/>
</dbReference>
<dbReference type="SUPFAM" id="SSF46589">
    <property type="entry name" value="tRNA-binding arm"/>
    <property type="match status" value="1"/>
</dbReference>
<dbReference type="PROSITE" id="PS50862">
    <property type="entry name" value="AA_TRNA_LIGASE_II"/>
    <property type="match status" value="1"/>
</dbReference>
<keyword id="KW-0030">Aminoacyl-tRNA synthetase</keyword>
<keyword id="KW-0067">ATP-binding</keyword>
<keyword id="KW-0963">Cytoplasm</keyword>
<keyword id="KW-0436">Ligase</keyword>
<keyword id="KW-0547">Nucleotide-binding</keyword>
<keyword id="KW-0648">Protein biosynthesis</keyword>
<sequence>MLDLKRIRTDFDTVAAKLKNRGVSEDTLTHLKELDEKRRTLLVQSEELKAGRNIASAAIAQAKRQKEDATQQIADMQKVSADIKTIDNQLVAIDQQVADIITVLPNTPHDSVPVGADEEDNVEIRRWGTPRDFDFEVKAHWDLGEDLDILDWERGAKVTGARFLFYKNLGARLERALYNFMLDEHIKEGYQEIITPYMVNHDSMFGTGQYPKFKEDTFELADTNFVLIPTAEVPLTNYYRGEILDGKELPIYFTAMSPSFRSEAGSAGRDTRGLIRLHQFHKVEMVKFAKPEESYQELEKMTANAENILQKLGLPYRVISLCTGDMGFSAAKTYDLEVWIPAQNTYREISSCSNTEDFQARRAQIRYRDEADGKVKLLHTLNGSGLAVGRTVAAILENYQNEDGSVTIPEVLRPYMGGETVISPK</sequence>
<name>SYS_STRPQ</name>
<gene>
    <name evidence="1" type="primary">serS</name>
    <name type="ordered locus">SPs0350</name>
</gene>
<protein>
    <recommendedName>
        <fullName evidence="1">Serine--tRNA ligase</fullName>
        <ecNumber evidence="1">6.1.1.11</ecNumber>
    </recommendedName>
    <alternativeName>
        <fullName evidence="1">Seryl-tRNA synthetase</fullName>
        <shortName evidence="1">SerRS</shortName>
    </alternativeName>
    <alternativeName>
        <fullName evidence="1">Seryl-tRNA(Ser/Sec) synthetase</fullName>
    </alternativeName>
</protein>
<organism>
    <name type="scientific">Streptococcus pyogenes serotype M3 (strain SSI-1)</name>
    <dbReference type="NCBI Taxonomy" id="193567"/>
    <lineage>
        <taxon>Bacteria</taxon>
        <taxon>Bacillati</taxon>
        <taxon>Bacillota</taxon>
        <taxon>Bacilli</taxon>
        <taxon>Lactobacillales</taxon>
        <taxon>Streptococcaceae</taxon>
        <taxon>Streptococcus</taxon>
    </lineage>
</organism>
<evidence type="ECO:0000255" key="1">
    <source>
        <dbReference type="HAMAP-Rule" id="MF_00176"/>
    </source>
</evidence>
<comment type="function">
    <text evidence="1">Catalyzes the attachment of serine to tRNA(Ser). Is also able to aminoacylate tRNA(Sec) with serine, to form the misacylated tRNA L-seryl-tRNA(Sec), which will be further converted into selenocysteinyl-tRNA(Sec).</text>
</comment>
<comment type="catalytic activity">
    <reaction evidence="1">
        <text>tRNA(Ser) + L-serine + ATP = L-seryl-tRNA(Ser) + AMP + diphosphate + H(+)</text>
        <dbReference type="Rhea" id="RHEA:12292"/>
        <dbReference type="Rhea" id="RHEA-COMP:9669"/>
        <dbReference type="Rhea" id="RHEA-COMP:9703"/>
        <dbReference type="ChEBI" id="CHEBI:15378"/>
        <dbReference type="ChEBI" id="CHEBI:30616"/>
        <dbReference type="ChEBI" id="CHEBI:33019"/>
        <dbReference type="ChEBI" id="CHEBI:33384"/>
        <dbReference type="ChEBI" id="CHEBI:78442"/>
        <dbReference type="ChEBI" id="CHEBI:78533"/>
        <dbReference type="ChEBI" id="CHEBI:456215"/>
        <dbReference type="EC" id="6.1.1.11"/>
    </reaction>
</comment>
<comment type="catalytic activity">
    <reaction evidence="1">
        <text>tRNA(Sec) + L-serine + ATP = L-seryl-tRNA(Sec) + AMP + diphosphate + H(+)</text>
        <dbReference type="Rhea" id="RHEA:42580"/>
        <dbReference type="Rhea" id="RHEA-COMP:9742"/>
        <dbReference type="Rhea" id="RHEA-COMP:10128"/>
        <dbReference type="ChEBI" id="CHEBI:15378"/>
        <dbReference type="ChEBI" id="CHEBI:30616"/>
        <dbReference type="ChEBI" id="CHEBI:33019"/>
        <dbReference type="ChEBI" id="CHEBI:33384"/>
        <dbReference type="ChEBI" id="CHEBI:78442"/>
        <dbReference type="ChEBI" id="CHEBI:78533"/>
        <dbReference type="ChEBI" id="CHEBI:456215"/>
        <dbReference type="EC" id="6.1.1.11"/>
    </reaction>
</comment>
<comment type="pathway">
    <text evidence="1">Aminoacyl-tRNA biosynthesis; selenocysteinyl-tRNA(Sec) biosynthesis; L-seryl-tRNA(Sec) from L-serine and tRNA(Sec): step 1/1.</text>
</comment>
<comment type="subunit">
    <text evidence="1">Homodimer. The tRNA molecule binds across the dimer.</text>
</comment>
<comment type="subcellular location">
    <subcellularLocation>
        <location evidence="1">Cytoplasm</location>
    </subcellularLocation>
</comment>
<comment type="domain">
    <text evidence="1">Consists of two distinct domains, a catalytic core and a N-terminal extension that is involved in tRNA binding.</text>
</comment>
<comment type="similarity">
    <text evidence="1">Belongs to the class-II aminoacyl-tRNA synthetase family. Type-1 seryl-tRNA synthetase subfamily.</text>
</comment>